<protein>
    <recommendedName>
        <fullName evidence="1">D-erythrose-4-phosphate dehydrogenase</fullName>
        <shortName evidence="1">E4PDH</shortName>
        <ecNumber evidence="1">1.2.1.72</ecNumber>
    </recommendedName>
</protein>
<dbReference type="EC" id="1.2.1.72" evidence="1"/>
<dbReference type="EMBL" id="CP001127">
    <property type="protein sequence ID" value="ACF92623.1"/>
    <property type="molecule type" value="Genomic_DNA"/>
</dbReference>
<dbReference type="RefSeq" id="WP_000218329.1">
    <property type="nucleotide sequence ID" value="NC_011094.1"/>
</dbReference>
<dbReference type="SMR" id="B4TV39"/>
<dbReference type="KEGG" id="sew:SeSA_A3243"/>
<dbReference type="HOGENOM" id="CLU_030140_0_0_6"/>
<dbReference type="UniPathway" id="UPA00244">
    <property type="reaction ID" value="UER00309"/>
</dbReference>
<dbReference type="Proteomes" id="UP000001865">
    <property type="component" value="Chromosome"/>
</dbReference>
<dbReference type="GO" id="GO:0005737">
    <property type="term" value="C:cytoplasm"/>
    <property type="evidence" value="ECO:0007669"/>
    <property type="project" value="UniProtKB-SubCell"/>
</dbReference>
<dbReference type="GO" id="GO:0048001">
    <property type="term" value="F:erythrose-4-phosphate dehydrogenase activity"/>
    <property type="evidence" value="ECO:0007669"/>
    <property type="project" value="UniProtKB-UniRule"/>
</dbReference>
<dbReference type="GO" id="GO:0051287">
    <property type="term" value="F:NAD binding"/>
    <property type="evidence" value="ECO:0007669"/>
    <property type="project" value="InterPro"/>
</dbReference>
<dbReference type="GO" id="GO:0050661">
    <property type="term" value="F:NADP binding"/>
    <property type="evidence" value="ECO:0007669"/>
    <property type="project" value="InterPro"/>
</dbReference>
<dbReference type="GO" id="GO:0006006">
    <property type="term" value="P:glucose metabolic process"/>
    <property type="evidence" value="ECO:0007669"/>
    <property type="project" value="InterPro"/>
</dbReference>
<dbReference type="GO" id="GO:0042823">
    <property type="term" value="P:pyridoxal phosphate biosynthetic process"/>
    <property type="evidence" value="ECO:0007669"/>
    <property type="project" value="UniProtKB-UniRule"/>
</dbReference>
<dbReference type="GO" id="GO:0008615">
    <property type="term" value="P:pyridoxine biosynthetic process"/>
    <property type="evidence" value="ECO:0007669"/>
    <property type="project" value="UniProtKB-UniRule"/>
</dbReference>
<dbReference type="CDD" id="cd23937">
    <property type="entry name" value="GAPDH_C_E4PDH"/>
    <property type="match status" value="1"/>
</dbReference>
<dbReference type="CDD" id="cd17892">
    <property type="entry name" value="GAPDH_N_E4PDH"/>
    <property type="match status" value="1"/>
</dbReference>
<dbReference type="FunFam" id="3.30.360.10:FF:000007">
    <property type="entry name" value="D-erythrose-4-phosphate dehydrogenase"/>
    <property type="match status" value="1"/>
</dbReference>
<dbReference type="FunFam" id="3.40.50.720:FF:000001">
    <property type="entry name" value="Glyceraldehyde-3-phosphate dehydrogenase"/>
    <property type="match status" value="1"/>
</dbReference>
<dbReference type="Gene3D" id="3.30.360.10">
    <property type="entry name" value="Dihydrodipicolinate Reductase, domain 2"/>
    <property type="match status" value="1"/>
</dbReference>
<dbReference type="Gene3D" id="3.40.50.720">
    <property type="entry name" value="NAD(P)-binding Rossmann-like Domain"/>
    <property type="match status" value="1"/>
</dbReference>
<dbReference type="HAMAP" id="MF_01640">
    <property type="entry name" value="E4P_dehydrog"/>
    <property type="match status" value="1"/>
</dbReference>
<dbReference type="InterPro" id="IPR006422">
    <property type="entry name" value="E4P_DH_bac"/>
</dbReference>
<dbReference type="InterPro" id="IPR020831">
    <property type="entry name" value="GlycerAld/Erythrose_P_DH"/>
</dbReference>
<dbReference type="InterPro" id="IPR020830">
    <property type="entry name" value="GlycerAld_3-P_DH_AS"/>
</dbReference>
<dbReference type="InterPro" id="IPR020829">
    <property type="entry name" value="GlycerAld_3-P_DH_cat"/>
</dbReference>
<dbReference type="InterPro" id="IPR020828">
    <property type="entry name" value="GlycerAld_3-P_DH_NAD(P)-bd"/>
</dbReference>
<dbReference type="InterPro" id="IPR006424">
    <property type="entry name" value="Glyceraldehyde-3-P_DH_1"/>
</dbReference>
<dbReference type="InterPro" id="IPR036291">
    <property type="entry name" value="NAD(P)-bd_dom_sf"/>
</dbReference>
<dbReference type="NCBIfam" id="TIGR01532">
    <property type="entry name" value="E4PD_g-proteo"/>
    <property type="match status" value="1"/>
</dbReference>
<dbReference type="NCBIfam" id="TIGR01534">
    <property type="entry name" value="GAPDH-I"/>
    <property type="match status" value="1"/>
</dbReference>
<dbReference type="NCBIfam" id="NF010058">
    <property type="entry name" value="PRK13535.1"/>
    <property type="match status" value="1"/>
</dbReference>
<dbReference type="PANTHER" id="PTHR43148">
    <property type="entry name" value="GLYCERALDEHYDE-3-PHOSPHATE DEHYDROGENASE 2"/>
    <property type="match status" value="1"/>
</dbReference>
<dbReference type="Pfam" id="PF02800">
    <property type="entry name" value="Gp_dh_C"/>
    <property type="match status" value="1"/>
</dbReference>
<dbReference type="Pfam" id="PF00044">
    <property type="entry name" value="Gp_dh_N"/>
    <property type="match status" value="1"/>
</dbReference>
<dbReference type="PIRSF" id="PIRSF000149">
    <property type="entry name" value="GAP_DH"/>
    <property type="match status" value="1"/>
</dbReference>
<dbReference type="PRINTS" id="PR00078">
    <property type="entry name" value="G3PDHDRGNASE"/>
</dbReference>
<dbReference type="SMART" id="SM00846">
    <property type="entry name" value="Gp_dh_N"/>
    <property type="match status" value="1"/>
</dbReference>
<dbReference type="SUPFAM" id="SSF55347">
    <property type="entry name" value="Glyceraldehyde-3-phosphate dehydrogenase-like, C-terminal domain"/>
    <property type="match status" value="1"/>
</dbReference>
<dbReference type="SUPFAM" id="SSF51735">
    <property type="entry name" value="NAD(P)-binding Rossmann-fold domains"/>
    <property type="match status" value="1"/>
</dbReference>
<dbReference type="PROSITE" id="PS00071">
    <property type="entry name" value="GAPDH"/>
    <property type="match status" value="1"/>
</dbReference>
<evidence type="ECO:0000255" key="1">
    <source>
        <dbReference type="HAMAP-Rule" id="MF_01640"/>
    </source>
</evidence>
<sequence length="348" mass="38139">MTVRIAINGFGRIGRNVVRALYESGRRAEITVVAINELADAAGMAHLLKYDTSHGRFAWEVRHEREQLFVGDDVIRILHERTLADLPWRELGVDIVLDCTGVYGNREHGEAHIAAGAKKVLFSHPGSNDLDATVVFGVNQNQLRAEHRIVSNASCTTNCIIPVIKLLDDAYGIESGTVTTIHSAMNDQQVIDAYHSDLRRTRAASQSIIPVDTKLAAGITRIFPQFNDRFEAIAVRVPTINVTAIDLSVTVKKPVKASEVNQLLQKAAQGAFHGIVDYTESPLVSIDFNHDPHSAIVDGTQTRVSGAHLIKTLVWCDNEWGFANRMLDTTLAMAAVGFRLDASASTKL</sequence>
<name>E4PD_SALSV</name>
<reference key="1">
    <citation type="journal article" date="2011" name="J. Bacteriol.">
        <title>Comparative genomics of 28 Salmonella enterica isolates: evidence for CRISPR-mediated adaptive sublineage evolution.</title>
        <authorList>
            <person name="Fricke W.F."/>
            <person name="Mammel M.K."/>
            <person name="McDermott P.F."/>
            <person name="Tartera C."/>
            <person name="White D.G."/>
            <person name="Leclerc J.E."/>
            <person name="Ravel J."/>
            <person name="Cebula T.A."/>
        </authorList>
    </citation>
    <scope>NUCLEOTIDE SEQUENCE [LARGE SCALE GENOMIC DNA]</scope>
    <source>
        <strain>CVM19633</strain>
    </source>
</reference>
<keyword id="KW-0963">Cytoplasm</keyword>
<keyword id="KW-0520">NAD</keyword>
<keyword id="KW-0560">Oxidoreductase</keyword>
<keyword id="KW-0664">Pyridoxine biosynthesis</keyword>
<accession>B4TV39</accession>
<feature type="chain" id="PRO_1000186840" description="D-erythrose-4-phosphate dehydrogenase">
    <location>
        <begin position="1"/>
        <end position="348"/>
    </location>
</feature>
<feature type="active site" description="Nucleophile" evidence="1">
    <location>
        <position position="155"/>
    </location>
</feature>
<feature type="binding site" evidence="1">
    <location>
        <begin position="12"/>
        <end position="13"/>
    </location>
    <ligand>
        <name>NAD(+)</name>
        <dbReference type="ChEBI" id="CHEBI:57540"/>
    </ligand>
</feature>
<feature type="binding site" evidence="1">
    <location>
        <position position="81"/>
    </location>
    <ligand>
        <name>NAD(+)</name>
        <dbReference type="ChEBI" id="CHEBI:57540"/>
    </ligand>
</feature>
<feature type="binding site" evidence="1">
    <location>
        <begin position="154"/>
        <end position="156"/>
    </location>
    <ligand>
        <name>substrate</name>
    </ligand>
</feature>
<feature type="binding site" evidence="1">
    <location>
        <position position="200"/>
    </location>
    <ligand>
        <name>substrate</name>
    </ligand>
</feature>
<feature type="binding site" evidence="1">
    <location>
        <begin position="213"/>
        <end position="214"/>
    </location>
    <ligand>
        <name>substrate</name>
    </ligand>
</feature>
<feature type="binding site" evidence="1">
    <location>
        <position position="236"/>
    </location>
    <ligand>
        <name>substrate</name>
    </ligand>
</feature>
<feature type="binding site" evidence="1">
    <location>
        <position position="318"/>
    </location>
    <ligand>
        <name>NAD(+)</name>
        <dbReference type="ChEBI" id="CHEBI:57540"/>
    </ligand>
</feature>
<feature type="site" description="Activates thiol group during catalysis" evidence="1">
    <location>
        <position position="182"/>
    </location>
</feature>
<comment type="function">
    <text evidence="1">Catalyzes the NAD-dependent conversion of D-erythrose 4-phosphate to 4-phosphoerythronate.</text>
</comment>
<comment type="catalytic activity">
    <reaction evidence="1">
        <text>D-erythrose 4-phosphate + NAD(+) + H2O = 4-phospho-D-erythronate + NADH + 2 H(+)</text>
        <dbReference type="Rhea" id="RHEA:12056"/>
        <dbReference type="ChEBI" id="CHEBI:15377"/>
        <dbReference type="ChEBI" id="CHEBI:15378"/>
        <dbReference type="ChEBI" id="CHEBI:16897"/>
        <dbReference type="ChEBI" id="CHEBI:57540"/>
        <dbReference type="ChEBI" id="CHEBI:57945"/>
        <dbReference type="ChEBI" id="CHEBI:58766"/>
        <dbReference type="EC" id="1.2.1.72"/>
    </reaction>
</comment>
<comment type="pathway">
    <text evidence="1">Cofactor biosynthesis; pyridoxine 5'-phosphate biosynthesis; pyridoxine 5'-phosphate from D-erythrose 4-phosphate: step 1/5.</text>
</comment>
<comment type="subunit">
    <text evidence="1">Homotetramer.</text>
</comment>
<comment type="subcellular location">
    <subcellularLocation>
        <location evidence="1">Cytoplasm</location>
    </subcellularLocation>
</comment>
<comment type="similarity">
    <text evidence="1">Belongs to the glyceraldehyde-3-phosphate dehydrogenase family. Epd subfamily.</text>
</comment>
<gene>
    <name evidence="1" type="primary">epd</name>
    <name type="ordered locus">SeSA_A3243</name>
</gene>
<proteinExistence type="inferred from homology"/>
<organism>
    <name type="scientific">Salmonella schwarzengrund (strain CVM19633)</name>
    <dbReference type="NCBI Taxonomy" id="439843"/>
    <lineage>
        <taxon>Bacteria</taxon>
        <taxon>Pseudomonadati</taxon>
        <taxon>Pseudomonadota</taxon>
        <taxon>Gammaproteobacteria</taxon>
        <taxon>Enterobacterales</taxon>
        <taxon>Enterobacteriaceae</taxon>
        <taxon>Salmonella</taxon>
    </lineage>
</organism>